<dbReference type="PIR" id="JS0024">
    <property type="entry name" value="JS0024"/>
</dbReference>
<dbReference type="SMR" id="P21788"/>
<dbReference type="iPTMnet" id="P21788"/>
<dbReference type="GO" id="GO:0005737">
    <property type="term" value="C:cytoplasm"/>
    <property type="evidence" value="ECO:0007669"/>
    <property type="project" value="UniProtKB-KW"/>
</dbReference>
<dbReference type="GO" id="GO:0005634">
    <property type="term" value="C:nucleus"/>
    <property type="evidence" value="ECO:0007669"/>
    <property type="project" value="UniProtKB-SubCell"/>
</dbReference>
<dbReference type="GO" id="GO:0005819">
    <property type="term" value="C:spindle"/>
    <property type="evidence" value="ECO:0007669"/>
    <property type="project" value="UniProtKB-SubCell"/>
</dbReference>
<dbReference type="GO" id="GO:0005509">
    <property type="term" value="F:calcium ion binding"/>
    <property type="evidence" value="ECO:0007669"/>
    <property type="project" value="InterPro"/>
</dbReference>
<dbReference type="CDD" id="cd00051">
    <property type="entry name" value="EFh"/>
    <property type="match status" value="2"/>
</dbReference>
<dbReference type="FunFam" id="1.10.238.10:FF:000527">
    <property type="entry name" value="Calmodulin-3"/>
    <property type="match status" value="1"/>
</dbReference>
<dbReference type="Gene3D" id="1.10.238.10">
    <property type="entry name" value="EF-hand"/>
    <property type="match status" value="2"/>
</dbReference>
<dbReference type="InterPro" id="IPR050145">
    <property type="entry name" value="Centrin_CML-like"/>
</dbReference>
<dbReference type="InterPro" id="IPR011992">
    <property type="entry name" value="EF-hand-dom_pair"/>
</dbReference>
<dbReference type="InterPro" id="IPR018247">
    <property type="entry name" value="EF_Hand_1_Ca_BS"/>
</dbReference>
<dbReference type="InterPro" id="IPR002048">
    <property type="entry name" value="EF_hand_dom"/>
</dbReference>
<dbReference type="PANTHER" id="PTHR23050">
    <property type="entry name" value="CALCIUM BINDING PROTEIN"/>
    <property type="match status" value="1"/>
</dbReference>
<dbReference type="Pfam" id="PF13499">
    <property type="entry name" value="EF-hand_7"/>
    <property type="match status" value="2"/>
</dbReference>
<dbReference type="SMART" id="SM00054">
    <property type="entry name" value="EFh"/>
    <property type="match status" value="4"/>
</dbReference>
<dbReference type="SUPFAM" id="SSF47473">
    <property type="entry name" value="EF-hand"/>
    <property type="match status" value="1"/>
</dbReference>
<dbReference type="PROSITE" id="PS00018">
    <property type="entry name" value="EF_HAND_1"/>
    <property type="match status" value="3"/>
</dbReference>
<dbReference type="PROSITE" id="PS50222">
    <property type="entry name" value="EF_HAND_2"/>
    <property type="match status" value="4"/>
</dbReference>
<name>SP15_HEMPU</name>
<comment type="function">
    <text>May play an important role in mitosis of sea urchin egg. May function as a Ca(2+)-dependent intracellular modulator of microtubule assembly.</text>
</comment>
<comment type="subcellular location">
    <subcellularLocation>
        <location>Nucleus</location>
    </subcellularLocation>
    <subcellularLocation>
        <location>Cytoplasm</location>
        <location>Cytoskeleton</location>
        <location>Spindle</location>
    </subcellularLocation>
    <text>Nuclei of fertilized eggs and mitotic apparatus of dividing eggs.</text>
</comment>
<feature type="chain" id="PRO_0000073641" description="15 kDa calcium-binding protein">
    <location>
        <begin position="1"/>
        <end position="150"/>
    </location>
</feature>
<feature type="domain" description="EF-hand 1" evidence="1">
    <location>
        <begin position="7"/>
        <end position="42"/>
    </location>
</feature>
<feature type="domain" description="EF-hand 2" evidence="1">
    <location>
        <begin position="43"/>
        <end position="78"/>
    </location>
</feature>
<feature type="domain" description="EF-hand 3" evidence="1">
    <location>
        <begin position="81"/>
        <end position="116"/>
    </location>
</feature>
<feature type="domain" description="EF-hand 4" evidence="1">
    <location>
        <begin position="118"/>
        <end position="150"/>
    </location>
</feature>
<feature type="binding site" evidence="3">
    <location>
        <position position="22"/>
    </location>
    <ligand>
        <name>Ca(2+)</name>
        <dbReference type="ChEBI" id="CHEBI:29108"/>
        <label>1</label>
    </ligand>
</feature>
<feature type="binding site" evidence="3">
    <location>
        <position position="24"/>
    </location>
    <ligand>
        <name>Ca(2+)</name>
        <dbReference type="ChEBI" id="CHEBI:29108"/>
        <label>1</label>
    </ligand>
</feature>
<feature type="binding site" evidence="3">
    <location>
        <position position="26"/>
    </location>
    <ligand>
        <name>Ca(2+)</name>
        <dbReference type="ChEBI" id="CHEBI:29108"/>
        <label>1</label>
    </ligand>
</feature>
<feature type="binding site" evidence="3">
    <location>
        <position position="28"/>
    </location>
    <ligand>
        <name>Ca(2+)</name>
        <dbReference type="ChEBI" id="CHEBI:29108"/>
        <label>1</label>
    </ligand>
</feature>
<feature type="binding site" evidence="1">
    <location>
        <position position="56"/>
    </location>
    <ligand>
        <name>Ca(2+)</name>
        <dbReference type="ChEBI" id="CHEBI:29108"/>
        <label>2</label>
    </ligand>
</feature>
<feature type="binding site" evidence="1">
    <location>
        <position position="58"/>
    </location>
    <ligand>
        <name>Ca(2+)</name>
        <dbReference type="ChEBI" id="CHEBI:29108"/>
        <label>2</label>
    </ligand>
</feature>
<feature type="binding site" evidence="1">
    <location>
        <position position="60"/>
    </location>
    <ligand>
        <name>Ca(2+)</name>
        <dbReference type="ChEBI" id="CHEBI:29108"/>
        <label>2</label>
    </ligand>
</feature>
<feature type="binding site" evidence="1">
    <location>
        <position position="62"/>
    </location>
    <ligand>
        <name>Ca(2+)</name>
        <dbReference type="ChEBI" id="CHEBI:29108"/>
        <label>2</label>
    </ligand>
</feature>
<feature type="binding site" evidence="1">
    <location>
        <position position="67"/>
    </location>
    <ligand>
        <name>Ca(2+)</name>
        <dbReference type="ChEBI" id="CHEBI:29108"/>
        <label>2</label>
    </ligand>
</feature>
<feature type="binding site" evidence="1">
    <location>
        <position position="94"/>
    </location>
    <ligand>
        <name>Ca(2+)</name>
        <dbReference type="ChEBI" id="CHEBI:29108"/>
        <label>3</label>
    </ligand>
</feature>
<feature type="binding site" evidence="1">
    <location>
        <position position="96"/>
    </location>
    <ligand>
        <name>Ca(2+)</name>
        <dbReference type="ChEBI" id="CHEBI:29108"/>
        <label>3</label>
    </ligand>
</feature>
<feature type="binding site" evidence="1">
    <location>
        <position position="98"/>
    </location>
    <ligand>
        <name>Ca(2+)</name>
        <dbReference type="ChEBI" id="CHEBI:29108"/>
        <label>3</label>
    </ligand>
</feature>
<feature type="binding site" evidence="1">
    <location>
        <position position="105"/>
    </location>
    <ligand>
        <name>Ca(2+)</name>
        <dbReference type="ChEBI" id="CHEBI:29108"/>
        <label>3</label>
    </ligand>
</feature>
<feature type="binding site" evidence="1">
    <location>
        <position position="131"/>
    </location>
    <ligand>
        <name>Ca(2+)</name>
        <dbReference type="ChEBI" id="CHEBI:29108"/>
        <label>4</label>
    </ligand>
</feature>
<feature type="binding site" evidence="1">
    <location>
        <position position="133"/>
    </location>
    <ligand>
        <name>Ca(2+)</name>
        <dbReference type="ChEBI" id="CHEBI:29108"/>
        <label>4</label>
    </ligand>
</feature>
<feature type="binding site" evidence="1">
    <location>
        <position position="135"/>
    </location>
    <ligand>
        <name>Ca(2+)</name>
        <dbReference type="ChEBI" id="CHEBI:29108"/>
        <label>4</label>
    </ligand>
</feature>
<feature type="binding site" evidence="1">
    <location>
        <position position="137"/>
    </location>
    <ligand>
        <name>Ca(2+)</name>
        <dbReference type="ChEBI" id="CHEBI:29108"/>
        <label>4</label>
    </ligand>
</feature>
<feature type="binding site" evidence="1">
    <location>
        <position position="142"/>
    </location>
    <ligand>
        <name>Ca(2+)</name>
        <dbReference type="ChEBI" id="CHEBI:29108"/>
        <label>4</label>
    </ligand>
</feature>
<feature type="modified residue" description="N-acetylalanine" evidence="2">
    <location>
        <position position="1"/>
    </location>
</feature>
<evidence type="ECO:0000255" key="1">
    <source>
        <dbReference type="PROSITE-ProRule" id="PRU00448"/>
    </source>
</evidence>
<evidence type="ECO:0000303" key="2">
    <source>
    </source>
</evidence>
<evidence type="ECO:0000305" key="3"/>
<sequence length="150" mass="16697">AVQLVFTDAEKAEFKFGFKSKDGDNSITAKELGEFLESAGKSFSEEQLAQMISDVDTDKSGTIEFSEMLMGIAEKMMKWTWKKSHFQKAFDDMDKDGNGVLSPEELHLAMSTRIEPPMSKEAIDAIIAKADCDGDGKINRKEFVKLIKSS</sequence>
<accession>P21788</accession>
<proteinExistence type="evidence at protein level"/>
<reference key="1">
    <citation type="journal article" date="1988" name="Cell Struct. Funct.">
        <title>The amino acid sequence, immunofluorescence and microinjection studies on the 15 kDa calcium-binding protein from sea urchin egg.</title>
        <authorList>
            <person name="Hosoya H."/>
            <person name="Takagi T."/>
            <person name="Mabuchi I."/>
            <person name="Iwaasa H."/>
            <person name="Sakai H."/>
            <person name="Hiramoto Y."/>
            <person name="Konishi K."/>
        </authorList>
    </citation>
    <scope>PROTEIN SEQUENCE</scope>
    <scope>ACETYLATION AT ALA-1</scope>
    <source>
        <tissue>Egg</tissue>
    </source>
</reference>
<protein>
    <recommendedName>
        <fullName>15 kDa calcium-binding protein</fullName>
        <shortName>CABP</shortName>
    </recommendedName>
</protein>
<keyword id="KW-0007">Acetylation</keyword>
<keyword id="KW-0106">Calcium</keyword>
<keyword id="KW-0963">Cytoplasm</keyword>
<keyword id="KW-0206">Cytoskeleton</keyword>
<keyword id="KW-0903">Direct protein sequencing</keyword>
<keyword id="KW-0479">Metal-binding</keyword>
<keyword id="KW-0539">Nucleus</keyword>
<keyword id="KW-0677">Repeat</keyword>
<organism>
    <name type="scientific">Hemicentrotus pulcherrimus</name>
    <name type="common">Sea urchin</name>
    <name type="synonym">Strongylocentrotus pulcherrimus</name>
    <dbReference type="NCBI Taxonomy" id="7650"/>
    <lineage>
        <taxon>Eukaryota</taxon>
        <taxon>Metazoa</taxon>
        <taxon>Echinodermata</taxon>
        <taxon>Eleutherozoa</taxon>
        <taxon>Echinozoa</taxon>
        <taxon>Echinoidea</taxon>
        <taxon>Euechinoidea</taxon>
        <taxon>Echinacea</taxon>
        <taxon>Camarodonta</taxon>
        <taxon>Echinidea</taxon>
        <taxon>Strongylocentrotidae</taxon>
        <taxon>Hemicentrotus</taxon>
    </lineage>
</organism>